<accession>Q6G6P6</accession>
<name>BIOB_STAAS</name>
<evidence type="ECO:0000255" key="1">
    <source>
        <dbReference type="HAMAP-Rule" id="MF_01694"/>
    </source>
</evidence>
<evidence type="ECO:0000255" key="2">
    <source>
        <dbReference type="PROSITE-ProRule" id="PRU01266"/>
    </source>
</evidence>
<comment type="function">
    <text evidence="1">Catalyzes the conversion of dethiobiotin (DTB) to biotin by the insertion of a sulfur atom into dethiobiotin via a radical-based mechanism.</text>
</comment>
<comment type="catalytic activity">
    <reaction evidence="1">
        <text>(4R,5S)-dethiobiotin + (sulfur carrier)-SH + 2 reduced [2Fe-2S]-[ferredoxin] + 2 S-adenosyl-L-methionine = (sulfur carrier)-H + biotin + 2 5'-deoxyadenosine + 2 L-methionine + 2 oxidized [2Fe-2S]-[ferredoxin]</text>
        <dbReference type="Rhea" id="RHEA:22060"/>
        <dbReference type="Rhea" id="RHEA-COMP:10000"/>
        <dbReference type="Rhea" id="RHEA-COMP:10001"/>
        <dbReference type="Rhea" id="RHEA-COMP:14737"/>
        <dbReference type="Rhea" id="RHEA-COMP:14739"/>
        <dbReference type="ChEBI" id="CHEBI:17319"/>
        <dbReference type="ChEBI" id="CHEBI:29917"/>
        <dbReference type="ChEBI" id="CHEBI:33737"/>
        <dbReference type="ChEBI" id="CHEBI:33738"/>
        <dbReference type="ChEBI" id="CHEBI:57586"/>
        <dbReference type="ChEBI" id="CHEBI:57844"/>
        <dbReference type="ChEBI" id="CHEBI:59789"/>
        <dbReference type="ChEBI" id="CHEBI:64428"/>
        <dbReference type="ChEBI" id="CHEBI:149473"/>
        <dbReference type="EC" id="2.8.1.6"/>
    </reaction>
</comment>
<comment type="cofactor">
    <cofactor evidence="1">
        <name>[4Fe-4S] cluster</name>
        <dbReference type="ChEBI" id="CHEBI:49883"/>
    </cofactor>
    <text evidence="1">Binds 1 [4Fe-4S] cluster. The cluster is coordinated with 3 cysteines and an exchangeable S-adenosyl-L-methionine.</text>
</comment>
<comment type="cofactor">
    <cofactor evidence="1">
        <name>[2Fe-2S] cluster</name>
        <dbReference type="ChEBI" id="CHEBI:190135"/>
    </cofactor>
    <text evidence="1">Binds 1 [2Fe-2S] cluster. The cluster is coordinated with 3 cysteines and 1 arginine.</text>
</comment>
<comment type="pathway">
    <text evidence="1">Cofactor biosynthesis; biotin biosynthesis; biotin from 7,8-diaminononanoate: step 2/2.</text>
</comment>
<comment type="subunit">
    <text evidence="1">Homodimer.</text>
</comment>
<comment type="similarity">
    <text evidence="1">Belongs to the radical SAM superfamily. Biotin synthase family.</text>
</comment>
<proteinExistence type="inferred from homology"/>
<sequence>MNLAKRILQGEQLTKETVLKIYEDTNIDTLDLLNEAYILRKHYFGKKVKLNMILNAKSGICPENCGYCGQSRDIKQKQRYALIPEEQIIDGAKVAHDNHIGTYCIVMSGRGPSDKEVDHISNTVRTIKSQHPQLKICACLGLTNDEQAKKLKSAGVDRYNHNINTSENYHDNVVTTHSYKDRTDTIELMKANNISPCSGVICGMGESNQDIVDMAFALKEMDADSIPINFLHPIKGTKFGSMDDLTPMKCLRIVALFRLINPTKEIRIAGGREVNLRSLQPLALKAANSIFVGDYLITGGQPNQLDYDMINDLGFEIDYDTCENKENKNDVSRAN</sequence>
<protein>
    <recommendedName>
        <fullName evidence="1">Biotin synthase</fullName>
        <ecNumber evidence="1">2.8.1.6</ecNumber>
    </recommendedName>
</protein>
<dbReference type="EC" id="2.8.1.6" evidence="1"/>
<dbReference type="EMBL" id="BX571857">
    <property type="protein sequence ID" value="CAG44129.1"/>
    <property type="molecule type" value="Genomic_DNA"/>
</dbReference>
<dbReference type="RefSeq" id="WP_001046645.1">
    <property type="nucleotide sequence ID" value="NC_002953.3"/>
</dbReference>
<dbReference type="SMR" id="Q6G6P6"/>
<dbReference type="KEGG" id="sas:SAS2316"/>
<dbReference type="HOGENOM" id="CLU_033172_2_1_9"/>
<dbReference type="UniPathway" id="UPA00078">
    <property type="reaction ID" value="UER00162"/>
</dbReference>
<dbReference type="GO" id="GO:0051537">
    <property type="term" value="F:2 iron, 2 sulfur cluster binding"/>
    <property type="evidence" value="ECO:0007669"/>
    <property type="project" value="UniProtKB-KW"/>
</dbReference>
<dbReference type="GO" id="GO:0051539">
    <property type="term" value="F:4 iron, 4 sulfur cluster binding"/>
    <property type="evidence" value="ECO:0007669"/>
    <property type="project" value="UniProtKB-KW"/>
</dbReference>
<dbReference type="GO" id="GO:0004076">
    <property type="term" value="F:biotin synthase activity"/>
    <property type="evidence" value="ECO:0007669"/>
    <property type="project" value="UniProtKB-UniRule"/>
</dbReference>
<dbReference type="GO" id="GO:0005506">
    <property type="term" value="F:iron ion binding"/>
    <property type="evidence" value="ECO:0007669"/>
    <property type="project" value="UniProtKB-UniRule"/>
</dbReference>
<dbReference type="GO" id="GO:0009102">
    <property type="term" value="P:biotin biosynthetic process"/>
    <property type="evidence" value="ECO:0007669"/>
    <property type="project" value="UniProtKB-UniRule"/>
</dbReference>
<dbReference type="CDD" id="cd01335">
    <property type="entry name" value="Radical_SAM"/>
    <property type="match status" value="1"/>
</dbReference>
<dbReference type="FunFam" id="3.20.20.70:FF:000026">
    <property type="entry name" value="Biotin synthase"/>
    <property type="match status" value="1"/>
</dbReference>
<dbReference type="Gene3D" id="3.20.20.70">
    <property type="entry name" value="Aldolase class I"/>
    <property type="match status" value="1"/>
</dbReference>
<dbReference type="HAMAP" id="MF_01694">
    <property type="entry name" value="BioB"/>
    <property type="match status" value="1"/>
</dbReference>
<dbReference type="InterPro" id="IPR013785">
    <property type="entry name" value="Aldolase_TIM"/>
</dbReference>
<dbReference type="InterPro" id="IPR010722">
    <property type="entry name" value="BATS_dom"/>
</dbReference>
<dbReference type="InterPro" id="IPR002684">
    <property type="entry name" value="Biotin_synth/BioAB"/>
</dbReference>
<dbReference type="InterPro" id="IPR024177">
    <property type="entry name" value="Biotin_synthase"/>
</dbReference>
<dbReference type="InterPro" id="IPR006638">
    <property type="entry name" value="Elp3/MiaA/NifB-like_rSAM"/>
</dbReference>
<dbReference type="InterPro" id="IPR007197">
    <property type="entry name" value="rSAM"/>
</dbReference>
<dbReference type="NCBIfam" id="TIGR00433">
    <property type="entry name" value="bioB"/>
    <property type="match status" value="1"/>
</dbReference>
<dbReference type="PANTHER" id="PTHR22976">
    <property type="entry name" value="BIOTIN SYNTHASE"/>
    <property type="match status" value="1"/>
</dbReference>
<dbReference type="PANTHER" id="PTHR22976:SF2">
    <property type="entry name" value="BIOTIN SYNTHASE, MITOCHONDRIAL"/>
    <property type="match status" value="1"/>
</dbReference>
<dbReference type="Pfam" id="PF06968">
    <property type="entry name" value="BATS"/>
    <property type="match status" value="1"/>
</dbReference>
<dbReference type="Pfam" id="PF04055">
    <property type="entry name" value="Radical_SAM"/>
    <property type="match status" value="1"/>
</dbReference>
<dbReference type="PIRSF" id="PIRSF001619">
    <property type="entry name" value="Biotin_synth"/>
    <property type="match status" value="1"/>
</dbReference>
<dbReference type="SFLD" id="SFLDG01060">
    <property type="entry name" value="BATS_domain_containing"/>
    <property type="match status" value="1"/>
</dbReference>
<dbReference type="SFLD" id="SFLDG01278">
    <property type="entry name" value="biotin_synthase_like"/>
    <property type="match status" value="1"/>
</dbReference>
<dbReference type="SMART" id="SM00876">
    <property type="entry name" value="BATS"/>
    <property type="match status" value="1"/>
</dbReference>
<dbReference type="SMART" id="SM00729">
    <property type="entry name" value="Elp3"/>
    <property type="match status" value="1"/>
</dbReference>
<dbReference type="SUPFAM" id="SSF102114">
    <property type="entry name" value="Radical SAM enzymes"/>
    <property type="match status" value="1"/>
</dbReference>
<dbReference type="PROSITE" id="PS51918">
    <property type="entry name" value="RADICAL_SAM"/>
    <property type="match status" value="1"/>
</dbReference>
<organism>
    <name type="scientific">Staphylococcus aureus (strain MSSA476)</name>
    <dbReference type="NCBI Taxonomy" id="282459"/>
    <lineage>
        <taxon>Bacteria</taxon>
        <taxon>Bacillati</taxon>
        <taxon>Bacillota</taxon>
        <taxon>Bacilli</taxon>
        <taxon>Bacillales</taxon>
        <taxon>Staphylococcaceae</taxon>
        <taxon>Staphylococcus</taxon>
    </lineage>
</organism>
<gene>
    <name evidence="1" type="primary">bioB</name>
    <name type="ordered locus">SAS2316</name>
</gene>
<reference key="1">
    <citation type="journal article" date="2004" name="Proc. Natl. Acad. Sci. U.S.A.">
        <title>Complete genomes of two clinical Staphylococcus aureus strains: evidence for the rapid evolution of virulence and drug resistance.</title>
        <authorList>
            <person name="Holden M.T.G."/>
            <person name="Feil E.J."/>
            <person name="Lindsay J.A."/>
            <person name="Peacock S.J."/>
            <person name="Day N.P.J."/>
            <person name="Enright M.C."/>
            <person name="Foster T.J."/>
            <person name="Moore C.E."/>
            <person name="Hurst L."/>
            <person name="Atkin R."/>
            <person name="Barron A."/>
            <person name="Bason N."/>
            <person name="Bentley S.D."/>
            <person name="Chillingworth C."/>
            <person name="Chillingworth T."/>
            <person name="Churcher C."/>
            <person name="Clark L."/>
            <person name="Corton C."/>
            <person name="Cronin A."/>
            <person name="Doggett J."/>
            <person name="Dowd L."/>
            <person name="Feltwell T."/>
            <person name="Hance Z."/>
            <person name="Harris B."/>
            <person name="Hauser H."/>
            <person name="Holroyd S."/>
            <person name="Jagels K."/>
            <person name="James K.D."/>
            <person name="Lennard N."/>
            <person name="Line A."/>
            <person name="Mayes R."/>
            <person name="Moule S."/>
            <person name="Mungall K."/>
            <person name="Ormond D."/>
            <person name="Quail M.A."/>
            <person name="Rabbinowitsch E."/>
            <person name="Rutherford K.M."/>
            <person name="Sanders M."/>
            <person name="Sharp S."/>
            <person name="Simmonds M."/>
            <person name="Stevens K."/>
            <person name="Whitehead S."/>
            <person name="Barrell B.G."/>
            <person name="Spratt B.G."/>
            <person name="Parkhill J."/>
        </authorList>
    </citation>
    <scope>NUCLEOTIDE SEQUENCE [LARGE SCALE GENOMIC DNA]</scope>
    <source>
        <strain>MSSA476</strain>
    </source>
</reference>
<feature type="chain" id="PRO_0000381653" description="Biotin synthase">
    <location>
        <begin position="1"/>
        <end position="335"/>
    </location>
</feature>
<feature type="domain" description="Radical SAM core" evidence="2">
    <location>
        <begin position="43"/>
        <end position="269"/>
    </location>
</feature>
<feature type="binding site" evidence="1">
    <location>
        <position position="61"/>
    </location>
    <ligand>
        <name>[4Fe-4S] cluster</name>
        <dbReference type="ChEBI" id="CHEBI:49883"/>
        <note>4Fe-4S-S-AdoMet</note>
    </ligand>
</feature>
<feature type="binding site" evidence="1">
    <location>
        <position position="65"/>
    </location>
    <ligand>
        <name>[4Fe-4S] cluster</name>
        <dbReference type="ChEBI" id="CHEBI:49883"/>
        <note>4Fe-4S-S-AdoMet</note>
    </ligand>
</feature>
<feature type="binding site" evidence="1">
    <location>
        <position position="68"/>
    </location>
    <ligand>
        <name>[4Fe-4S] cluster</name>
        <dbReference type="ChEBI" id="CHEBI:49883"/>
        <note>4Fe-4S-S-AdoMet</note>
    </ligand>
</feature>
<feature type="binding site" evidence="1">
    <location>
        <position position="104"/>
    </location>
    <ligand>
        <name>[2Fe-2S] cluster</name>
        <dbReference type="ChEBI" id="CHEBI:190135"/>
    </ligand>
</feature>
<feature type="binding site" evidence="1">
    <location>
        <position position="137"/>
    </location>
    <ligand>
        <name>[2Fe-2S] cluster</name>
        <dbReference type="ChEBI" id="CHEBI:190135"/>
    </ligand>
</feature>
<feature type="binding site" evidence="1">
    <location>
        <position position="197"/>
    </location>
    <ligand>
        <name>[2Fe-2S] cluster</name>
        <dbReference type="ChEBI" id="CHEBI:190135"/>
    </ligand>
</feature>
<feature type="binding site" evidence="1">
    <location>
        <position position="267"/>
    </location>
    <ligand>
        <name>[2Fe-2S] cluster</name>
        <dbReference type="ChEBI" id="CHEBI:190135"/>
    </ligand>
</feature>
<keyword id="KW-0001">2Fe-2S</keyword>
<keyword id="KW-0004">4Fe-4S</keyword>
<keyword id="KW-0093">Biotin biosynthesis</keyword>
<keyword id="KW-0408">Iron</keyword>
<keyword id="KW-0411">Iron-sulfur</keyword>
<keyword id="KW-0479">Metal-binding</keyword>
<keyword id="KW-0949">S-adenosyl-L-methionine</keyword>
<keyword id="KW-0808">Transferase</keyword>